<proteinExistence type="evidence at protein level"/>
<reference evidence="14" key="1">
    <citation type="journal article" date="2001" name="Dev. Cell">
        <title>zyg-8, a gene required for spindle positioning in C. elegans, encodes a doublecortin-related kinase that promotes microtubule assembly.</title>
        <authorList>
            <person name="Gonczy P."/>
            <person name="Bellanger J.M."/>
            <person name="Kirkham M."/>
            <person name="Pozniakowski A."/>
            <person name="Baumer K."/>
            <person name="Phillips J.B."/>
            <person name="Hyman A.A."/>
        </authorList>
    </citation>
    <scope>NUCLEOTIDE SEQUENCE [MRNA]</scope>
    <scope>FUNCTION</scope>
    <scope>SUBCELLULAR LOCATION</scope>
    <scope>DISRUPTION PHENOTYPE</scope>
</reference>
<reference key="2">
    <citation type="journal article" date="1998" name="Science">
        <title>Genome sequence of the nematode C. elegans: a platform for investigating biology.</title>
        <authorList>
            <consortium name="The C. elegans sequencing consortium"/>
        </authorList>
    </citation>
    <scope>NUCLEOTIDE SEQUENCE [LARGE SCALE GENOMIC DNA]</scope>
    <source>
        <strain>Bristol N2</strain>
    </source>
</reference>
<reference evidence="14" key="3">
    <citation type="journal article" date="2007" name="J. Cell Sci.">
        <title>ZYG-9, TAC-1 and ZYG-8 together ensure correct microtubule function throughout the cell cycle of C. elegans embryos.</title>
        <authorList>
            <person name="Bellanger J.M."/>
            <person name="Carter J.C."/>
            <person name="Phillips J.B."/>
            <person name="Canard C."/>
            <person name="Bowerman B."/>
            <person name="Gonczy P."/>
        </authorList>
    </citation>
    <scope>FUNCTION</scope>
    <scope>INTERACTION WITH TAC-1</scope>
</reference>
<reference evidence="14" key="4">
    <citation type="journal article" date="2012" name="J. Cell Sci.">
        <title>The doublecortin-related gene zyg-8 is a microtubule organizer in Caenorhabditis elegans neurons.</title>
        <authorList>
            <person name="Bellanger J.M."/>
            <person name="Cueva J.G."/>
            <person name="Baran R."/>
            <person name="Tang G."/>
            <person name="Goodman M.B."/>
            <person name="Debant A."/>
        </authorList>
    </citation>
    <scope>FUNCTION</scope>
    <scope>TISSUE SPECIFICITY</scope>
    <scope>MUTAGENESIS OF GLY-219 AND GLY-491</scope>
</reference>
<reference key="5">
    <citation type="journal article" date="2022" name="PLoS Genet.">
        <title>OLA-1, an Obg-like ATPase, integrates hunger with temperature information in sensory neurons in C. elegans.</title>
        <authorList>
            <person name="Aoki I."/>
            <person name="Jurado P."/>
            <person name="Nawa K."/>
            <person name="Kondo R."/>
            <person name="Yamashiro R."/>
            <person name="Matsuyama H.J."/>
            <person name="Ferrer I."/>
            <person name="Nakano S."/>
            <person name="Mori I."/>
        </authorList>
    </citation>
    <scope>FUNCTION</scope>
    <scope>TISSUE SPECIFICITY</scope>
    <scope>MUTAGENESIS OF LEU-723</scope>
</reference>
<reference evidence="14" key="6">
    <citation type="journal article" date="2024" name="PLoS Genet.">
        <title>The doublecortin-family kinase ZYG-8DCLK1 regulates microtubule dynamics and motor-driven forces to promote the stability of C. elegans acentrosomal spindles.</title>
        <authorList>
            <person name="Czajkowski E.R."/>
            <person name="Zou Y."/>
            <person name="Divekar N.S."/>
            <person name="Wignall S.M."/>
        </authorList>
    </citation>
    <scope>FUNCTION</scope>
    <scope>SUBCELLULAR LOCATION</scope>
    <scope>MUTAGENESIS OF GLY-219; ASP-604 AND LEU-723</scope>
</reference>
<name>DCLK_CAEEL</name>
<protein>
    <recommendedName>
        <fullName>Serine/threonine-protein kinase zyg-8</fullName>
        <ecNumber>2.7.11.1</ecNumber>
    </recommendedName>
    <alternativeName>
        <fullName>Doublecortin-like and CAM kinase-like protein</fullName>
    </alternativeName>
</protein>
<organism>
    <name type="scientific">Caenorhabditis elegans</name>
    <dbReference type="NCBI Taxonomy" id="6239"/>
    <lineage>
        <taxon>Eukaryota</taxon>
        <taxon>Metazoa</taxon>
        <taxon>Ecdysozoa</taxon>
        <taxon>Nematoda</taxon>
        <taxon>Chromadorea</taxon>
        <taxon>Rhabditida</taxon>
        <taxon>Rhabditina</taxon>
        <taxon>Rhabditomorpha</taxon>
        <taxon>Rhabditoidea</taxon>
        <taxon>Rhabditidae</taxon>
        <taxon>Peloderinae</taxon>
        <taxon>Caenorhabditis</taxon>
    </lineage>
</organism>
<dbReference type="EC" id="2.7.11.1"/>
<dbReference type="EMBL" id="AJ319870">
    <property type="protein sequence ID" value="CAC67459.1"/>
    <property type="molecule type" value="mRNA"/>
</dbReference>
<dbReference type="EMBL" id="BX284603">
    <property type="protein sequence ID" value="CAB54507.2"/>
    <property type="molecule type" value="Genomic_DNA"/>
</dbReference>
<dbReference type="EMBL" id="AL033514">
    <property type="protein sequence ID" value="CAB54507.2"/>
    <property type="status" value="JOINED"/>
    <property type="molecule type" value="Genomic_DNA"/>
</dbReference>
<dbReference type="EMBL" id="BX284603">
    <property type="protein sequence ID" value="SFQ94279.1"/>
    <property type="molecule type" value="Genomic_DNA"/>
</dbReference>
<dbReference type="PIR" id="T27429">
    <property type="entry name" value="T27429"/>
</dbReference>
<dbReference type="RefSeq" id="NP_001334209.1">
    <molecule id="Q95QC4-2"/>
    <property type="nucleotide sequence ID" value="NM_001347293.3"/>
</dbReference>
<dbReference type="RefSeq" id="NP_499571.2">
    <molecule id="Q95QC4-1"/>
    <property type="nucleotide sequence ID" value="NM_067170.5"/>
</dbReference>
<dbReference type="SMR" id="Q95QC4"/>
<dbReference type="BioGRID" id="41819">
    <property type="interactions" value="40"/>
</dbReference>
<dbReference type="ComplexPortal" id="CPX-374">
    <property type="entry name" value="Zyg-8/Tac-1 complex"/>
</dbReference>
<dbReference type="DIP" id="DIP-25008N"/>
<dbReference type="FunCoup" id="Q95QC4">
    <property type="interactions" value="2086"/>
</dbReference>
<dbReference type="IntAct" id="Q95QC4">
    <property type="interactions" value="23"/>
</dbReference>
<dbReference type="STRING" id="6239.Y79H2A.11a.1"/>
<dbReference type="PaxDb" id="6239-Y79H2A.11"/>
<dbReference type="PeptideAtlas" id="Q95QC4"/>
<dbReference type="EnsemblMetazoa" id="Y79H2A.11a.1">
    <molecule id="Q95QC4-1"/>
    <property type="protein sequence ID" value="Y79H2A.11a.1"/>
    <property type="gene ID" value="WBGene00006993"/>
</dbReference>
<dbReference type="EnsemblMetazoa" id="Y79H2A.11b.1">
    <molecule id="Q95QC4-2"/>
    <property type="protein sequence ID" value="Y79H2A.11b.1"/>
    <property type="gene ID" value="WBGene00006993"/>
</dbReference>
<dbReference type="GeneID" id="176639"/>
<dbReference type="KEGG" id="cel:CELE_Y79H2A.11"/>
<dbReference type="UCSC" id="Y79H2A.11">
    <molecule id="Q95QC4-1"/>
    <property type="organism name" value="c. elegans"/>
</dbReference>
<dbReference type="AGR" id="WB:WBGene00006993"/>
<dbReference type="CTD" id="176639"/>
<dbReference type="WormBase" id="Y79H2A.11a">
    <property type="protein sequence ID" value="CE31133"/>
    <property type="gene ID" value="WBGene00006993"/>
    <property type="gene designation" value="zyg-8"/>
</dbReference>
<dbReference type="WormBase" id="Y79H2A.11b">
    <property type="protein sequence ID" value="CE51800"/>
    <property type="gene ID" value="WBGene00006993"/>
    <property type="gene designation" value="zyg-8"/>
</dbReference>
<dbReference type="eggNOG" id="KOG0032">
    <property type="taxonomic scope" value="Eukaryota"/>
</dbReference>
<dbReference type="eggNOG" id="KOG3757">
    <property type="taxonomic scope" value="Eukaryota"/>
</dbReference>
<dbReference type="GeneTree" id="ENSGT00940000168856"/>
<dbReference type="HOGENOM" id="CLU_000288_94_0_1"/>
<dbReference type="InParanoid" id="Q95QC4"/>
<dbReference type="OMA" id="LTAITQC"/>
<dbReference type="OrthoDB" id="2956627at2759"/>
<dbReference type="PhylomeDB" id="Q95QC4"/>
<dbReference type="SignaLink" id="Q95QC4"/>
<dbReference type="PRO" id="PR:Q95QC4"/>
<dbReference type="Proteomes" id="UP000001940">
    <property type="component" value="Chromosome III"/>
</dbReference>
<dbReference type="Bgee" id="WBGene00006993">
    <property type="expression patterns" value="Expressed in adult organism and 4 other cell types or tissues"/>
</dbReference>
<dbReference type="ExpressionAtlas" id="Q95QC4">
    <property type="expression patterns" value="baseline and differential"/>
</dbReference>
<dbReference type="GO" id="GO:0005813">
    <property type="term" value="C:centrosome"/>
    <property type="evidence" value="ECO:0000314"/>
    <property type="project" value="WormBase"/>
</dbReference>
<dbReference type="GO" id="GO:0005737">
    <property type="term" value="C:cytoplasm"/>
    <property type="evidence" value="ECO:0007669"/>
    <property type="project" value="UniProtKB-ARBA"/>
</dbReference>
<dbReference type="GO" id="GO:0072687">
    <property type="term" value="C:meiotic spindle"/>
    <property type="evidence" value="ECO:0000269"/>
    <property type="project" value="ComplexPortal"/>
</dbReference>
<dbReference type="GO" id="GO:0015630">
    <property type="term" value="C:microtubule cytoskeleton"/>
    <property type="evidence" value="ECO:0000314"/>
    <property type="project" value="WormBase"/>
</dbReference>
<dbReference type="GO" id="GO:1990498">
    <property type="term" value="C:mitotic spindle microtubule"/>
    <property type="evidence" value="ECO:0000314"/>
    <property type="project" value="WormBase"/>
</dbReference>
<dbReference type="GO" id="GO:0097431">
    <property type="term" value="C:mitotic spindle pole"/>
    <property type="evidence" value="ECO:0000314"/>
    <property type="project" value="WormBase"/>
</dbReference>
<dbReference type="GO" id="GO:0005634">
    <property type="term" value="C:nucleus"/>
    <property type="evidence" value="ECO:0000318"/>
    <property type="project" value="GO_Central"/>
</dbReference>
<dbReference type="GO" id="GO:0005524">
    <property type="term" value="F:ATP binding"/>
    <property type="evidence" value="ECO:0007669"/>
    <property type="project" value="InterPro"/>
</dbReference>
<dbReference type="GO" id="GO:0008017">
    <property type="term" value="F:microtubule binding"/>
    <property type="evidence" value="ECO:0000314"/>
    <property type="project" value="WormBase"/>
</dbReference>
<dbReference type="GO" id="GO:0004672">
    <property type="term" value="F:protein kinase activity"/>
    <property type="evidence" value="ECO:0007669"/>
    <property type="project" value="InterPro"/>
</dbReference>
<dbReference type="GO" id="GO:0106310">
    <property type="term" value="F:protein serine kinase activity"/>
    <property type="evidence" value="ECO:0007669"/>
    <property type="project" value="RHEA"/>
</dbReference>
<dbReference type="GO" id="GO:0004674">
    <property type="term" value="F:protein serine/threonine kinase activity"/>
    <property type="evidence" value="ECO:0000318"/>
    <property type="project" value="GO_Central"/>
</dbReference>
<dbReference type="GO" id="GO:0040001">
    <property type="term" value="P:establishment of mitotic spindle localization"/>
    <property type="evidence" value="ECO:0000315"/>
    <property type="project" value="WormBase"/>
</dbReference>
<dbReference type="GO" id="GO:0035556">
    <property type="term" value="P:intracellular signal transduction"/>
    <property type="evidence" value="ECO:0007669"/>
    <property type="project" value="InterPro"/>
</dbReference>
<dbReference type="GO" id="GO:0007017">
    <property type="term" value="P:microtubule-based process"/>
    <property type="evidence" value="ECO:0000314"/>
    <property type="project" value="ComplexPortal"/>
</dbReference>
<dbReference type="GO" id="GO:0044773">
    <property type="term" value="P:mitotic DNA damage checkpoint signaling"/>
    <property type="evidence" value="ECO:0000318"/>
    <property type="project" value="GO_Central"/>
</dbReference>
<dbReference type="GO" id="GO:0007026">
    <property type="term" value="P:negative regulation of microtubule depolymerization"/>
    <property type="evidence" value="ECO:0000314"/>
    <property type="project" value="WormBase"/>
</dbReference>
<dbReference type="GO" id="GO:0040040">
    <property type="term" value="P:thermosensory behavior"/>
    <property type="evidence" value="ECO:0000315"/>
    <property type="project" value="UniProtKB"/>
</dbReference>
<dbReference type="GO" id="GO:0043052">
    <property type="term" value="P:thermotaxis"/>
    <property type="evidence" value="ECO:0000315"/>
    <property type="project" value="UniProtKB"/>
</dbReference>
<dbReference type="CDD" id="cd16109">
    <property type="entry name" value="DCX1"/>
    <property type="match status" value="1"/>
</dbReference>
<dbReference type="CDD" id="cd17069">
    <property type="entry name" value="DCX2"/>
    <property type="match status" value="1"/>
</dbReference>
<dbReference type="CDD" id="cd14095">
    <property type="entry name" value="STKc_DCKL"/>
    <property type="match status" value="1"/>
</dbReference>
<dbReference type="FunFam" id="3.10.20.230:FF:000018">
    <property type="entry name" value="Echinoderm microtubule-associated protein-like CG42247"/>
    <property type="match status" value="1"/>
</dbReference>
<dbReference type="FunFam" id="3.10.20.230:FF:000017">
    <property type="entry name" value="Serine/threonine-protein kinase GA29083"/>
    <property type="match status" value="1"/>
</dbReference>
<dbReference type="FunFam" id="1.10.510.10:FF:001553">
    <property type="entry name" value="Serine/threonine-protein kinase zyg-8"/>
    <property type="match status" value="1"/>
</dbReference>
<dbReference type="Gene3D" id="3.10.20.230">
    <property type="entry name" value="Doublecortin domain"/>
    <property type="match status" value="2"/>
</dbReference>
<dbReference type="Gene3D" id="1.10.510.10">
    <property type="entry name" value="Transferase(Phosphotransferase) domain 1"/>
    <property type="match status" value="1"/>
</dbReference>
<dbReference type="InterPro" id="IPR003533">
    <property type="entry name" value="Doublecortin_dom"/>
</dbReference>
<dbReference type="InterPro" id="IPR036572">
    <property type="entry name" value="Doublecortin_dom_sf"/>
</dbReference>
<dbReference type="InterPro" id="IPR011009">
    <property type="entry name" value="Kinase-like_dom_sf"/>
</dbReference>
<dbReference type="InterPro" id="IPR000719">
    <property type="entry name" value="Prot_kinase_dom"/>
</dbReference>
<dbReference type="InterPro" id="IPR008271">
    <property type="entry name" value="Ser/Thr_kinase_AS"/>
</dbReference>
<dbReference type="PANTHER" id="PTHR24347">
    <property type="entry name" value="SERINE/THREONINE-PROTEIN KINASE"/>
    <property type="match status" value="1"/>
</dbReference>
<dbReference type="Pfam" id="PF03607">
    <property type="entry name" value="DCX"/>
    <property type="match status" value="2"/>
</dbReference>
<dbReference type="Pfam" id="PF00069">
    <property type="entry name" value="Pkinase"/>
    <property type="match status" value="1"/>
</dbReference>
<dbReference type="SMART" id="SM00537">
    <property type="entry name" value="DCX"/>
    <property type="match status" value="2"/>
</dbReference>
<dbReference type="SMART" id="SM00220">
    <property type="entry name" value="S_TKc"/>
    <property type="match status" value="1"/>
</dbReference>
<dbReference type="SUPFAM" id="SSF89837">
    <property type="entry name" value="Doublecortin (DC)"/>
    <property type="match status" value="2"/>
</dbReference>
<dbReference type="SUPFAM" id="SSF56112">
    <property type="entry name" value="Protein kinase-like (PK-like)"/>
    <property type="match status" value="1"/>
</dbReference>
<dbReference type="PROSITE" id="PS50309">
    <property type="entry name" value="DC"/>
    <property type="match status" value="2"/>
</dbReference>
<dbReference type="PROSITE" id="PS50011">
    <property type="entry name" value="PROTEIN_KINASE_DOM"/>
    <property type="match status" value="1"/>
</dbReference>
<dbReference type="PROSITE" id="PS00108">
    <property type="entry name" value="PROTEIN_KINASE_ST"/>
    <property type="match status" value="1"/>
</dbReference>
<feature type="chain" id="PRO_0000400091" description="Serine/threonine-protein kinase zyg-8">
    <location>
        <begin position="1"/>
        <end position="802"/>
    </location>
</feature>
<feature type="domain" description="Doublecortin 1" evidence="4">
    <location>
        <begin position="211"/>
        <end position="298"/>
    </location>
</feature>
<feature type="domain" description="Doublecortin 2" evidence="4">
    <location>
        <begin position="340"/>
        <end position="423"/>
    </location>
</feature>
<feature type="domain" description="Protein kinase" evidence="5">
    <location>
        <begin position="482"/>
        <end position="743"/>
    </location>
</feature>
<feature type="region of interest" description="Disordered" evidence="7">
    <location>
        <begin position="1"/>
        <end position="102"/>
    </location>
</feature>
<feature type="region of interest" description="Disordered" evidence="7">
    <location>
        <begin position="430"/>
        <end position="470"/>
    </location>
</feature>
<feature type="compositionally biased region" description="Polar residues" evidence="7">
    <location>
        <begin position="1"/>
        <end position="13"/>
    </location>
</feature>
<feature type="compositionally biased region" description="Pro residues" evidence="7">
    <location>
        <begin position="15"/>
        <end position="24"/>
    </location>
</feature>
<feature type="compositionally biased region" description="Low complexity" evidence="7">
    <location>
        <begin position="89"/>
        <end position="99"/>
    </location>
</feature>
<feature type="compositionally biased region" description="Low complexity" evidence="7">
    <location>
        <begin position="434"/>
        <end position="454"/>
    </location>
</feature>
<feature type="active site" description="Proton acceptor" evidence="2 5 6">
    <location>
        <position position="604"/>
    </location>
</feature>
<feature type="binding site" evidence="2 5">
    <location>
        <begin position="488"/>
        <end position="496"/>
    </location>
    <ligand>
        <name>ATP</name>
        <dbReference type="ChEBI" id="CHEBI:30616"/>
    </ligand>
</feature>
<feature type="binding site" evidence="2 5">
    <location>
        <position position="512"/>
    </location>
    <ligand>
        <name>ATP</name>
        <dbReference type="ChEBI" id="CHEBI:30616"/>
    </ligand>
</feature>
<feature type="splice variant" id="VSP_062518" description="In isoform b.">
    <location>
        <begin position="1"/>
        <end position="153"/>
    </location>
</feature>
<feature type="mutagenesis site" description="In or484; temperature sensitive mutant with oocyte spindle showing morphological defects including formation of multiple poles and fragmentation at 25 degrees Celsius. Exhibits shorter body length phenotype, called dumpy, and a roller phenotype, where worms twist around their antero-posterior axis during crawling. Displays lethargic behavior due to synaptic defects, resulting in longer immobility during crawling and reduced crawling speed. Reduces touch sensitivity probably due to polarity and shape defects in touch receptor neurons (TRN) and the disruption of TRN axonal transport. Causes abnormal axon morphology and the detachment of the D-neurons from the nerve cord." evidence="10 12">
    <original>G</original>
    <variation>E</variation>
    <location>
        <position position="219"/>
    </location>
</feature>
<feature type="mutagenesis site" description="In or490; exhibits shorter body length phenotype, called dumpy, and a roller phenotype, where worms twist around their antero-posterior axis during crawling. Displays lethargic behavior due to synaptic defects, resulting in longer immobility during crawling and reduced crawling speed. Reduces touch sensitivity probably due to polarity and shape defects in touch receptor neurons (TRN) and the disruption of TRN axonal transport. Causes abnormal axon morphology and the detachment of the D-neurons from the nerve cord." evidence="10">
    <original>G</original>
    <variation>E</variation>
    <location>
        <position position="491"/>
    </location>
</feature>
<feature type="mutagenesis site" description="Shows embryonic lethality with 98% of laid eggs dying. Defective in spindle polar positioning." evidence="12">
    <original>D</original>
    <variation>N</variation>
    <location>
        <position position="604"/>
    </location>
</feature>
<feature type="mutagenesis site" description="In b235ts; defective thermotaxis. Oocyte spindle shows morphological defects including the formation of multiple poles and fragmentation at 25 degrees Celsius." evidence="11 12">
    <original>L</original>
    <variation>F</variation>
    <location>
        <position position="723"/>
    </location>
</feature>
<comment type="function">
    <text evidence="8 9 10 11 12 13">Probable kinase (PubMed:39226307). Kinase activity may be involved in positioning of spindle poles in meiosis and mitosis (PubMed:39226307). Plays a role in spindle positioning during asymmetric division of one-cell stage embryos (PubMed:11702948, PubMed:39226307). Affects spindle position by promoting microtubule assembly during anaphase (PubMed:17666432, PubMed:39226307). Plays a role in the assembly and stability of oocyte spindle, perhaps balancing the forces in the spindle and maintaining their morphology during metaphase (PubMed:39226307). Plays a role in cell division and in embryonic viability up until gastrulation (PubMed:22956537). Required for neuronal morphology and polarity and restricting ectopic process outgrowth; probably as a result of a role in maintaining microtubule integrity (PubMed:22956537). Involved in maintaining neuronal microtubule number, length and packing (PubMed:22956537). May promote axonal and synaptic growth (PubMed:22956537). Plays a role in regulating thermotaxis responses in AFD thermosensory neurons (PubMed:35675262). Required for touch sensitivity in adult touch response receptor neurons (PubMed:22956537).</text>
</comment>
<comment type="catalytic activity">
    <reaction evidence="1">
        <text>L-seryl-[protein] + ATP = O-phospho-L-seryl-[protein] + ADP + H(+)</text>
        <dbReference type="Rhea" id="RHEA:17989"/>
        <dbReference type="Rhea" id="RHEA-COMP:9863"/>
        <dbReference type="Rhea" id="RHEA-COMP:11604"/>
        <dbReference type="ChEBI" id="CHEBI:15378"/>
        <dbReference type="ChEBI" id="CHEBI:29999"/>
        <dbReference type="ChEBI" id="CHEBI:30616"/>
        <dbReference type="ChEBI" id="CHEBI:83421"/>
        <dbReference type="ChEBI" id="CHEBI:456216"/>
        <dbReference type="EC" id="2.7.11.1"/>
    </reaction>
</comment>
<comment type="catalytic activity">
    <reaction evidence="1">
        <text>L-threonyl-[protein] + ATP = O-phospho-L-threonyl-[protein] + ADP + H(+)</text>
        <dbReference type="Rhea" id="RHEA:46608"/>
        <dbReference type="Rhea" id="RHEA-COMP:11060"/>
        <dbReference type="Rhea" id="RHEA-COMP:11605"/>
        <dbReference type="ChEBI" id="CHEBI:15378"/>
        <dbReference type="ChEBI" id="CHEBI:30013"/>
        <dbReference type="ChEBI" id="CHEBI:30616"/>
        <dbReference type="ChEBI" id="CHEBI:61977"/>
        <dbReference type="ChEBI" id="CHEBI:456216"/>
        <dbReference type="EC" id="2.7.11.1"/>
    </reaction>
</comment>
<comment type="subunit">
    <text evidence="9">Interacts with tac-1.</text>
</comment>
<comment type="interaction">
    <interactant intactId="EBI-331795">
        <id>Q95QC4</id>
    </interactant>
    <interactant intactId="EBI-320612">
        <id>G5ECG0</id>
        <label>tac-1</label>
    </interactant>
    <organismsDiffer>false</organismsDiffer>
    <experiments>3</experiments>
</comment>
<comment type="subcellular location">
    <subcellularLocation>
        <location evidence="8">Cytoplasm</location>
        <location evidence="8">Cytoskeleton</location>
        <location evidence="8">Microtubule organizing center</location>
        <location evidence="8">Centrosome</location>
    </subcellularLocation>
    <subcellularLocation>
        <location evidence="8 12">Cytoplasm</location>
        <location evidence="8 12">Cytoskeleton</location>
        <location evidence="8 12">Spindle</location>
    </subcellularLocation>
    <text evidence="8">Enriched at microtubule asters throughout the cell cycle and is present on the spindle during mitosis.</text>
</comment>
<comment type="alternative products">
    <event type="alternative splicing"/>
    <isoform>
        <id>Q95QC4-1</id>
        <name evidence="15">a</name>
        <sequence type="displayed"/>
    </isoform>
    <isoform>
        <id>Q95QC4-2</id>
        <name evidence="16">b</name>
        <sequence type="described" ref="VSP_062518"/>
    </isoform>
</comment>
<comment type="tissue specificity">
    <text evidence="10 11">Expressed in AFD thermosensory neurons (PubMed:35675262). Expressed in cells near the nerve ring, in motor neurons in the ventral nerve cord and in the six touch receptor neurons including ALML/R, PLML/R and AVM and PVM (PubMed:22956537). Expressed in hypodermal and neural tissues and in the germline (PubMed:22956537).</text>
</comment>
<comment type="disruption phenotype">
    <text evidence="8">Maternal-effect embryonic lethal resulting in dramatic spindle positioning defects in one-cell stage embryos.</text>
</comment>
<comment type="similarity">
    <text evidence="3">Belongs to the protein kinase superfamily. CAMK Ser/Thr protein kinase family. CaMK subfamily.</text>
</comment>
<gene>
    <name evidence="15" type="primary">zyg-8</name>
    <name evidence="15" type="ORF">Y79H2A.11</name>
</gene>
<sequence length="802" mass="90038">MPQTSAWQLNDTTARPPPPPPPPGSEAGGSDGASMNGANTLPRVSKRVSAAGKTSNIPRFKRPHLPHSTRPLSAVLTSSSSPVVHRKISPSSSAPSTSSAHRRFSHLPQQHFHHHIHHNQTAVISEETLTTPRASTLNLNQTSVFPTAISQGSMPNSGTNTAEASMTSSVCAMETEGTNGDELAESRDMVSEMQRRCRIGPSGYPHLLKAKRLRFYRNGDQYFKGIQYALQSDRVKSMQPLMEDLMKTVICDSTALPHGIRHIFTIDGAQRITSVDQFEDGGGYVCSSTDAFKPVDYSRAAEPSWRLTLANRYNRHLETKKLALSVVEPCHENTDFVFPRIIKVIRNGVKPRRISRHLLNKKTARSFDQVLRDLTFVVKLDSGAIRKLFTLSGRPVLSLQDFFRDDDVFVAYGGNEKMAADDLLVASEEHKSVGSGTSSNMRRTSRRSTMPNRNESLRHDRSGSVIPDQDQQRLPPLLDEKFQLVRLIGDGNTAVVYEVIDKTNNDDRKAMKVIARENVIGKEHLIEMELAILQKIDHTFIVQLYDHWFVDDSYYLSLELIEMGDLFEHLRIVRRVPERDAVRMMTCLGQALEYIHELGIVHRDVKLENLLIVKDEFGELGVKLADFGLAAEMPKDFGVLSTICGTPTYVAPEVLNKTGYGCKVDIWAAGVILYAILVGFPPFQSSDGSEQDLFSAIMSGEFSFPSPSWDDVSWSVRHLIMCLIHTDPFHRYSAGELLNDEWMVNLGDVDPEYEEWAHRFVQSKMHVEEEQETPYEYYTSRRTSMDELSESAAVEFSYSCES</sequence>
<evidence type="ECO:0000250" key="1">
    <source>
        <dbReference type="UniProtKB" id="O15075"/>
    </source>
</evidence>
<evidence type="ECO:0000250" key="2">
    <source>
        <dbReference type="UniProtKB" id="P28523"/>
    </source>
</evidence>
<evidence type="ECO:0000255" key="3"/>
<evidence type="ECO:0000255" key="4">
    <source>
        <dbReference type="PROSITE-ProRule" id="PRU00072"/>
    </source>
</evidence>
<evidence type="ECO:0000255" key="5">
    <source>
        <dbReference type="PROSITE-ProRule" id="PRU00159"/>
    </source>
</evidence>
<evidence type="ECO:0000255" key="6">
    <source>
        <dbReference type="PROSITE-ProRule" id="PRU10027"/>
    </source>
</evidence>
<evidence type="ECO:0000256" key="7">
    <source>
        <dbReference type="SAM" id="MobiDB-lite"/>
    </source>
</evidence>
<evidence type="ECO:0000269" key="8">
    <source>
    </source>
</evidence>
<evidence type="ECO:0000269" key="9">
    <source>
    </source>
</evidence>
<evidence type="ECO:0000269" key="10">
    <source>
    </source>
</evidence>
<evidence type="ECO:0000269" key="11">
    <source>
    </source>
</evidence>
<evidence type="ECO:0000269" key="12">
    <source>
    </source>
</evidence>
<evidence type="ECO:0000303" key="13">
    <source>
    </source>
</evidence>
<evidence type="ECO:0000305" key="14"/>
<evidence type="ECO:0000312" key="15">
    <source>
        <dbReference type="WormBase" id="Y79H2A.11a"/>
    </source>
</evidence>
<evidence type="ECO:0000312" key="16">
    <source>
        <dbReference type="WormBase" id="Y79H2A.11b"/>
    </source>
</evidence>
<accession>Q95QC4</accession>
<accession>A0A1I6CM54</accession>
<accession>Q9U1S0</accession>
<keyword id="KW-0025">Alternative splicing</keyword>
<keyword id="KW-0067">ATP-binding</keyword>
<keyword id="KW-0131">Cell cycle</keyword>
<keyword id="KW-0963">Cytoplasm</keyword>
<keyword id="KW-0206">Cytoskeleton</keyword>
<keyword id="KW-0217">Developmental protein</keyword>
<keyword id="KW-0418">Kinase</keyword>
<keyword id="KW-0547">Nucleotide-binding</keyword>
<keyword id="KW-1185">Reference proteome</keyword>
<keyword id="KW-0677">Repeat</keyword>
<keyword id="KW-0723">Serine/threonine-protein kinase</keyword>
<keyword id="KW-0808">Transferase</keyword>